<reference evidence="5 7" key="1">
    <citation type="journal article" date="2008" name="Appl. Environ. Microbiol.">
        <title>Cloning and overexpression of alkaline phosphatase PhoK from Sphingomonas sp. strain BSAR-1 for bioprecipitation of uranium from alkaline solutions.</title>
        <authorList>
            <person name="Nilgiriwala K.S."/>
            <person name="Alahari A."/>
            <person name="Rao A.S."/>
            <person name="Apte S.K."/>
        </authorList>
    </citation>
    <scope>NUCLEOTIDE SEQUENCE [GENOMIC DNA]</scope>
    <scope>FUNCTION</scope>
    <scope>CATALYTIC ACTIVITY</scope>
    <scope>BIOPHYSICOCHEMICAL PROPERTIES</scope>
    <scope>SUBCELLULAR LOCATION</scope>
    <scope>INDUCTION</scope>
    <source>
        <strain evidence="2">BSAR-1</strain>
    </source>
</reference>
<reference evidence="5" key="2">
    <citation type="submission" date="2009-09" db="UniProtKB">
        <title>PhoK alkaline phosphatase.</title>
        <authorList>
            <person name="Nilgiriwala K.S."/>
            <person name="Apte S.K."/>
        </authorList>
    </citation>
    <scope>IDENTIFICATION BY MASS SPECTROMETRY</scope>
    <source>
        <strain evidence="4">BSAR-1</strain>
    </source>
</reference>
<reference evidence="5" key="3">
    <citation type="journal article" date="2009" name="Acta Crystallogr. F">
        <title>Crystallization and preliminary X-ray crystallographic analysis of PhoK, an extracellular alkaline phosphatase from Sphingomonas sp. BSAR-1.</title>
        <authorList>
            <person name="Nilgiriwala K.S."/>
            <person name="Bihani S.C."/>
            <person name="Das A."/>
            <person name="Prashar V."/>
            <person name="Kumar M."/>
            <person name="Ferrer J.L."/>
            <person name="Apte S.K."/>
            <person name="Hosur M.V."/>
        </authorList>
    </citation>
    <scope>CRYSTALLIZATION</scope>
    <source>
        <strain>BSAR-1</strain>
    </source>
</reference>
<reference key="4">
    <citation type="journal article" date="2011" name="PLoS ONE">
        <title>X-ray structure reveals a new class and provides insight into evolution of alkaline phosphatases.</title>
        <authorList>
            <person name="Bihani S.C."/>
            <person name="Das A."/>
            <person name="Nilgiriwala K.S."/>
            <person name="Prashar V."/>
            <person name="Pirocchi M."/>
            <person name="Apte S.K."/>
            <person name="Ferrer J.L."/>
            <person name="Hosur M.V."/>
        </authorList>
    </citation>
    <scope>X-RAY CRYSTALLOGRAPHY (1.95 ANGSTROMS) IN COMPLEX WITH ZINC AND SUBSTRATE</scope>
    <scope>FUNCTION</scope>
    <scope>CATALYTIC ACTIVITY</scope>
    <scope>COFACTOR</scope>
    <scope>SUBUNIT</scope>
    <scope>ACTIVE SITE</scope>
    <scope>DISULFIDE BONDS</scope>
    <source>
        <strain>BSAR-1</strain>
    </source>
</reference>
<proteinExistence type="evidence at protein level"/>
<dbReference type="EC" id="3.1.3.1"/>
<dbReference type="EMBL" id="EF143994">
    <property type="protein sequence ID" value="ABL96598.1"/>
    <property type="molecule type" value="Genomic_DNA"/>
</dbReference>
<dbReference type="PDB" id="3Q3Q">
    <property type="method" value="X-ray"/>
    <property type="resolution" value="1.95 A"/>
    <property type="chains" value="A=1-559"/>
</dbReference>
<dbReference type="PDB" id="5XWI">
    <property type="method" value="X-ray"/>
    <property type="resolution" value="1.87 A"/>
    <property type="chains" value="A=1-559"/>
</dbReference>
<dbReference type="PDB" id="5XWK">
    <property type="method" value="X-ray"/>
    <property type="resolution" value="1.90 A"/>
    <property type="chains" value="A=1-559"/>
</dbReference>
<dbReference type="PDBsum" id="3Q3Q"/>
<dbReference type="PDBsum" id="5XWI"/>
<dbReference type="PDBsum" id="5XWK"/>
<dbReference type="SMR" id="A1YYW7"/>
<dbReference type="BRENDA" id="3.1.3.1">
    <property type="organism ID" value="10569"/>
</dbReference>
<dbReference type="EvolutionaryTrace" id="A1YYW7"/>
<dbReference type="GO" id="GO:0005576">
    <property type="term" value="C:extracellular region"/>
    <property type="evidence" value="ECO:0000314"/>
    <property type="project" value="UniProtKB"/>
</dbReference>
<dbReference type="GO" id="GO:0004035">
    <property type="term" value="F:alkaline phosphatase activity"/>
    <property type="evidence" value="ECO:0000314"/>
    <property type="project" value="UniProtKB"/>
</dbReference>
<dbReference type="GO" id="GO:0046872">
    <property type="term" value="F:metal ion binding"/>
    <property type="evidence" value="ECO:0000314"/>
    <property type="project" value="UniProtKB"/>
</dbReference>
<dbReference type="GO" id="GO:0008270">
    <property type="term" value="F:zinc ion binding"/>
    <property type="evidence" value="ECO:0000314"/>
    <property type="project" value="UniProtKB"/>
</dbReference>
<dbReference type="CDD" id="cd16016">
    <property type="entry name" value="AP-SPAP"/>
    <property type="match status" value="1"/>
</dbReference>
<dbReference type="FunFam" id="3.30.1360.150:FF:000001">
    <property type="entry name" value="Alkaline phosphatase PhoK"/>
    <property type="match status" value="1"/>
</dbReference>
<dbReference type="Gene3D" id="3.30.1360.150">
    <property type="match status" value="1"/>
</dbReference>
<dbReference type="Gene3D" id="3.40.720.10">
    <property type="entry name" value="Alkaline Phosphatase, subunit A"/>
    <property type="match status" value="1"/>
</dbReference>
<dbReference type="InterPro" id="IPR017850">
    <property type="entry name" value="Alkaline_phosphatase_core_sf"/>
</dbReference>
<dbReference type="InterPro" id="IPR026263">
    <property type="entry name" value="Alkaline_phosphatase_prok"/>
</dbReference>
<dbReference type="InterPro" id="IPR002591">
    <property type="entry name" value="Phosphodiest/P_Trfase"/>
</dbReference>
<dbReference type="PANTHER" id="PTHR10151:SF120">
    <property type="entry name" value="BIS(5'-ADENOSYL)-TRIPHOSPHATASE"/>
    <property type="match status" value="1"/>
</dbReference>
<dbReference type="PANTHER" id="PTHR10151">
    <property type="entry name" value="ECTONUCLEOTIDE PYROPHOSPHATASE/PHOSPHODIESTERASE"/>
    <property type="match status" value="1"/>
</dbReference>
<dbReference type="Pfam" id="PF01663">
    <property type="entry name" value="Phosphodiest"/>
    <property type="match status" value="1"/>
</dbReference>
<dbReference type="PIRSF" id="PIRSF031924">
    <property type="entry name" value="Pi-irrepressible_AP"/>
    <property type="match status" value="1"/>
</dbReference>
<dbReference type="SUPFAM" id="SSF53649">
    <property type="entry name" value="Alkaline phosphatase-like"/>
    <property type="match status" value="1"/>
</dbReference>
<evidence type="ECO:0000255" key="1"/>
<evidence type="ECO:0000269" key="2">
    <source>
    </source>
</evidence>
<evidence type="ECO:0000269" key="3">
    <source>
    </source>
</evidence>
<evidence type="ECO:0000269" key="4">
    <source ref="2"/>
</evidence>
<evidence type="ECO:0000305" key="5"/>
<evidence type="ECO:0000305" key="6">
    <source>
    </source>
</evidence>
<evidence type="ECO:0000312" key="7">
    <source>
        <dbReference type="EMBL" id="ABL96598.1"/>
    </source>
</evidence>
<evidence type="ECO:0007829" key="8">
    <source>
        <dbReference type="PDB" id="5XWI"/>
    </source>
</evidence>
<evidence type="ECO:0007829" key="9">
    <source>
        <dbReference type="PDB" id="5XWK"/>
    </source>
</evidence>
<name>ALPH_SPHSX</name>
<protein>
    <recommendedName>
        <fullName>Alkaline phosphatase PhoK</fullName>
        <ecNumber>3.1.3.1</ecNumber>
    </recommendedName>
    <alternativeName>
        <fullName>SPAP protein</fullName>
    </alternativeName>
</protein>
<comment type="function">
    <text evidence="2 3">Alkaline phosphatase with broad substrate specificity. Precipitates uranium from alkaline solutions.</text>
</comment>
<comment type="catalytic activity">
    <reaction evidence="2 3">
        <text>a phosphate monoester + H2O = an alcohol + phosphate</text>
        <dbReference type="Rhea" id="RHEA:15017"/>
        <dbReference type="ChEBI" id="CHEBI:15377"/>
        <dbReference type="ChEBI" id="CHEBI:30879"/>
        <dbReference type="ChEBI" id="CHEBI:43474"/>
        <dbReference type="ChEBI" id="CHEBI:67140"/>
        <dbReference type="EC" id="3.1.3.1"/>
    </reaction>
</comment>
<comment type="cofactor">
    <cofactor evidence="3">
        <name>Zn(2+)</name>
        <dbReference type="ChEBI" id="CHEBI:29105"/>
    </cofactor>
    <text evidence="3">Binds 2 Zn(2+) ions.</text>
</comment>
<comment type="biophysicochemical properties">
    <phDependence>
        <text evidence="2">Optimum pH is 9.0.</text>
    </phDependence>
</comment>
<comment type="subunit">
    <text evidence="3">Monomer.</text>
</comment>
<comment type="subcellular location">
    <subcellularLocation>
        <location evidence="2">Secreted</location>
    </subcellularLocation>
</comment>
<comment type="induction">
    <text evidence="2">Constitutively expressed.</text>
</comment>
<gene>
    <name evidence="7" type="primary">phoK</name>
</gene>
<accession>A1YYW7</accession>
<sequence length="559" mass="59982">MLKHVAAALLLATAMPVVAQSPAPAAAPAPAARSIAATPPKLIVAISVDQFSADLFSEYRQYYTGGLKRLTSEGAVFPRGYQSHAATETCPGHSTILTGSRPSRTGIIANNWFDLDAKREDKNLYCAEDESQPGSSSDKYEASPLHLKVPTLGGRMKAANPATRVVSVAGKDRAAIMMGGATADQVWWLGGPQGYVSYKGVAPTPLVTQVNQAFAQRLAQPNPGFELPAQCVSKDFPVQAGNRTVGTGRFARDAGDYKGFRISPEQDAMTLAFAAAAIENMQLGKQAQTDIISIGLSATDYVGHTFGTEGTESCIQVDRLDTELGAFFDKLDKDGIDYVVVLTADHGGHDLPERHRMNAMPMEQRVDMALTPKALNATIAEKAGLPGKKVIWSDGPSGDIYYDKGLTAAQRARVETEALKYLRAHPQVQTVFTKAEIAATPSPSGPPESWSLIQEARASFYPSRSGDLLLLLKPRVMSIPEQAVMGSVATHGSPWDTDRRVPILFWRKGMQHFEQPLGVETVDILPSLAALIKLPVPKDQIDGRCLDLVAGKDDSCAGQ</sequence>
<organism>
    <name type="scientific">Sphingomonas sp</name>
    <dbReference type="NCBI Taxonomy" id="28214"/>
    <lineage>
        <taxon>Bacteria</taxon>
        <taxon>Pseudomonadati</taxon>
        <taxon>Pseudomonadota</taxon>
        <taxon>Alphaproteobacteria</taxon>
        <taxon>Sphingomonadales</taxon>
        <taxon>Sphingomonadaceae</taxon>
        <taxon>Sphingomonas</taxon>
    </lineage>
</organism>
<feature type="signal peptide" evidence="1">
    <location>
        <begin position="1"/>
        <end position="19"/>
    </location>
</feature>
<feature type="chain" id="PRO_0000392472" description="Alkaline phosphatase PhoK">
    <location>
        <begin position="20"/>
        <end position="559"/>
    </location>
</feature>
<feature type="active site" description="Phosphothreonine intermediate" evidence="6">
    <location>
        <position position="89"/>
    </location>
</feature>
<feature type="binding site" evidence="3">
    <location>
        <position position="49"/>
    </location>
    <ligand>
        <name>Zn(2+)</name>
        <dbReference type="ChEBI" id="CHEBI:29105"/>
        <label>1</label>
    </ligand>
</feature>
<feature type="binding site" evidence="3">
    <location>
        <position position="89"/>
    </location>
    <ligand>
        <name>Zn(2+)</name>
        <dbReference type="ChEBI" id="CHEBI:29105"/>
        <label>1</label>
    </ligand>
</feature>
<feature type="binding site" evidence="3">
    <location>
        <position position="110"/>
    </location>
    <ligand>
        <name>substrate</name>
    </ligand>
</feature>
<feature type="binding site">
    <location>
        <begin position="171"/>
        <end position="173"/>
    </location>
    <ligand>
        <name>substrate</name>
    </ligand>
</feature>
<feature type="binding site" evidence="3">
    <location>
        <position position="300"/>
    </location>
    <ligand>
        <name>Zn(2+)</name>
        <dbReference type="ChEBI" id="CHEBI:29105"/>
        <label>2</label>
    </ligand>
</feature>
<feature type="binding site" evidence="3">
    <location>
        <position position="304"/>
    </location>
    <ligand>
        <name>Zn(2+)</name>
        <dbReference type="ChEBI" id="CHEBI:29105"/>
        <label>2</label>
    </ligand>
</feature>
<feature type="binding site" evidence="3">
    <location>
        <position position="345"/>
    </location>
    <ligand>
        <name>Zn(2+)</name>
        <dbReference type="ChEBI" id="CHEBI:29105"/>
        <label>1</label>
    </ligand>
</feature>
<feature type="binding site" evidence="3">
    <location>
        <position position="346"/>
    </location>
    <ligand>
        <name>Zn(2+)</name>
        <dbReference type="ChEBI" id="CHEBI:29105"/>
        <label>1</label>
    </ligand>
</feature>
<feature type="binding site" evidence="3">
    <location>
        <position position="491"/>
    </location>
    <ligand>
        <name>Zn(2+)</name>
        <dbReference type="ChEBI" id="CHEBI:29105"/>
        <label>2</label>
    </ligand>
</feature>
<feature type="disulfide bond" evidence="3">
    <location>
        <begin position="90"/>
        <end position="126"/>
    </location>
</feature>
<feature type="disulfide bond" evidence="3">
    <location>
        <begin position="231"/>
        <end position="314"/>
    </location>
</feature>
<feature type="disulfide bond" evidence="3">
    <location>
        <begin position="545"/>
        <end position="556"/>
    </location>
</feature>
<feature type="strand" evidence="8">
    <location>
        <begin position="41"/>
        <end position="48"/>
    </location>
</feature>
<feature type="helix" evidence="8">
    <location>
        <begin position="53"/>
        <end position="59"/>
    </location>
</feature>
<feature type="helix" evidence="8">
    <location>
        <begin position="60"/>
        <end position="62"/>
    </location>
</feature>
<feature type="helix" evidence="8">
    <location>
        <begin position="66"/>
        <end position="73"/>
    </location>
</feature>
<feature type="strand" evidence="8">
    <location>
        <begin position="74"/>
        <end position="81"/>
    </location>
</feature>
<feature type="helix" evidence="8">
    <location>
        <begin position="89"/>
        <end position="96"/>
    </location>
</feature>
<feature type="helix" evidence="8">
    <location>
        <begin position="102"/>
        <end position="105"/>
    </location>
</feature>
<feature type="strand" evidence="8">
    <location>
        <begin position="109"/>
        <end position="113"/>
    </location>
</feature>
<feature type="strand" evidence="8">
    <location>
        <begin position="118"/>
        <end position="120"/>
    </location>
</feature>
<feature type="strand" evidence="8">
    <location>
        <begin position="123"/>
        <end position="125"/>
    </location>
</feature>
<feature type="strand" evidence="9">
    <location>
        <begin position="137"/>
        <end position="139"/>
    </location>
</feature>
<feature type="helix" evidence="8">
    <location>
        <begin position="152"/>
        <end position="159"/>
    </location>
</feature>
<feature type="strand" evidence="8">
    <location>
        <begin position="165"/>
        <end position="171"/>
    </location>
</feature>
<feature type="helix" evidence="8">
    <location>
        <begin position="172"/>
        <end position="179"/>
    </location>
</feature>
<feature type="strand" evidence="8">
    <location>
        <begin position="184"/>
        <end position="189"/>
    </location>
</feature>
<feature type="helix" evidence="8">
    <location>
        <begin position="205"/>
        <end position="218"/>
    </location>
</feature>
<feature type="helix" evidence="8">
    <location>
        <begin position="229"/>
        <end position="234"/>
    </location>
</feature>
<feature type="strand" evidence="8">
    <location>
        <begin position="238"/>
        <end position="240"/>
    </location>
</feature>
<feature type="strand" evidence="8">
    <location>
        <begin position="243"/>
        <end position="246"/>
    </location>
</feature>
<feature type="helix" evidence="8">
    <location>
        <begin position="257"/>
        <end position="261"/>
    </location>
</feature>
<feature type="helix" evidence="8">
    <location>
        <begin position="264"/>
        <end position="280"/>
    </location>
</feature>
<feature type="turn" evidence="8">
    <location>
        <begin position="281"/>
        <end position="284"/>
    </location>
</feature>
<feature type="strand" evidence="8">
    <location>
        <begin position="285"/>
        <end position="288"/>
    </location>
</feature>
<feature type="strand" evidence="8">
    <location>
        <begin position="290"/>
        <end position="296"/>
    </location>
</feature>
<feature type="helix" evidence="8">
    <location>
        <begin position="298"/>
        <end position="306"/>
    </location>
</feature>
<feature type="strand" evidence="8">
    <location>
        <begin position="308"/>
        <end position="310"/>
    </location>
</feature>
<feature type="helix" evidence="8">
    <location>
        <begin position="311"/>
        <end position="333"/>
    </location>
</feature>
<feature type="strand" evidence="8">
    <location>
        <begin position="338"/>
        <end position="343"/>
    </location>
</feature>
<feature type="helix" evidence="8">
    <location>
        <begin position="352"/>
        <end position="355"/>
    </location>
</feature>
<feature type="turn" evidence="8">
    <location>
        <begin position="356"/>
        <end position="359"/>
    </location>
</feature>
<feature type="helix" evidence="8">
    <location>
        <begin position="368"/>
        <end position="370"/>
    </location>
</feature>
<feature type="helix" evidence="8">
    <location>
        <begin position="372"/>
        <end position="378"/>
    </location>
</feature>
<feature type="strand" evidence="8">
    <location>
        <begin position="391"/>
        <end position="402"/>
    </location>
</feature>
<feature type="helix" evidence="8">
    <location>
        <begin position="419"/>
        <end position="424"/>
    </location>
</feature>
<feature type="strand" evidence="8">
    <location>
        <begin position="428"/>
        <end position="433"/>
    </location>
</feature>
<feature type="helix" evidence="8">
    <location>
        <begin position="434"/>
        <end position="438"/>
    </location>
</feature>
<feature type="helix" evidence="8">
    <location>
        <begin position="447"/>
        <end position="449"/>
    </location>
</feature>
<feature type="helix" evidence="8">
    <location>
        <begin position="452"/>
        <end position="458"/>
    </location>
</feature>
<feature type="turn" evidence="8">
    <location>
        <begin position="462"/>
        <end position="464"/>
    </location>
</feature>
<feature type="strand" evidence="8">
    <location>
        <begin position="467"/>
        <end position="472"/>
    </location>
</feature>
<feature type="strand" evidence="8">
    <location>
        <begin position="476"/>
        <end position="479"/>
    </location>
</feature>
<feature type="strand" evidence="8">
    <location>
        <begin position="493"/>
        <end position="495"/>
    </location>
</feature>
<feature type="helix" evidence="8">
    <location>
        <begin position="496"/>
        <end position="499"/>
    </location>
</feature>
<feature type="strand" evidence="8">
    <location>
        <begin position="500"/>
        <end position="506"/>
    </location>
</feature>
<feature type="helix" evidence="8">
    <location>
        <begin position="521"/>
        <end position="523"/>
    </location>
</feature>
<feature type="helix" evidence="8">
    <location>
        <begin position="524"/>
        <end position="531"/>
    </location>
</feature>
<feature type="helix" evidence="8">
    <location>
        <begin position="538"/>
        <end position="540"/>
    </location>
</feature>
<keyword id="KW-0002">3D-structure</keyword>
<keyword id="KW-1015">Disulfide bond</keyword>
<keyword id="KW-0378">Hydrolase</keyword>
<keyword id="KW-0479">Metal-binding</keyword>
<keyword id="KW-0597">Phosphoprotein</keyword>
<keyword id="KW-0964">Secreted</keyword>
<keyword id="KW-0732">Signal</keyword>
<keyword id="KW-0862">Zinc</keyword>